<protein>
    <recommendedName>
        <fullName>Dihydroorotase-like protein</fullName>
    </recommendedName>
    <alternativeName>
        <fullName>Aspartate carbamoyltransferase 45 kDa non-catalytic chain</fullName>
    </alternativeName>
</protein>
<evidence type="ECO:0000250" key="1">
    <source>
        <dbReference type="UniProtKB" id="Q59712"/>
    </source>
</evidence>
<evidence type="ECO:0000305" key="2"/>
<reference key="1">
    <citation type="journal article" date="1993" name="Proc. Natl. Acad. Sci. U.S.A.">
        <title>Subunit structure of a class A aspartate transcarbamoylase from Pseudomonas fluorescens.</title>
        <authorList>
            <person name="Bergh S.T."/>
            <person name="Evans D.R."/>
        </authorList>
    </citation>
    <scope>PROTEIN SEQUENCE</scope>
    <source>
        <strain>ATCC 13525 / DSM 50090 / JCM 5963 / NBRC 14160 / NCIMB 9046 / NCTC 10038 / VKM B-894</strain>
    </source>
</reference>
<proteinExistence type="evidence at protein level"/>
<sequence length="20" mass="2063">MKLSILGARVIDPASGLXXV</sequence>
<keyword id="KW-0903">Direct protein sequencing</keyword>
<keyword id="KW-0665">Pyrimidine biosynthesis</keyword>
<feature type="chain" id="PRO_0000147285" description="Dihydroorotase-like protein">
    <location>
        <begin position="1"/>
        <end position="20" status="greater than"/>
    </location>
</feature>
<feature type="non-terminal residue">
    <location>
        <position position="20"/>
    </location>
</feature>
<comment type="function">
    <text evidence="1">Non-functional DHOase.</text>
</comment>
<comment type="subunit">
    <text evidence="1">Heterododecamer of 6 active PyrB subunits and 6 non-catalytic PyrC' subunits.</text>
</comment>
<comment type="similarity">
    <text evidence="2">Belongs to the metallo-dependent hydrolases superfamily. DHOase family. PyrC' subfamily.</text>
</comment>
<organism>
    <name type="scientific">Pseudomonas fluorescens biotype A</name>
    <dbReference type="NCBI Taxonomy" id="32035"/>
    <lineage>
        <taxon>Bacteria</taxon>
        <taxon>Pseudomonadati</taxon>
        <taxon>Pseudomonadota</taxon>
        <taxon>Gammaproteobacteria</taxon>
        <taxon>Pseudomonadales</taxon>
        <taxon>Pseudomonadaceae</taxon>
        <taxon>Pseudomonas</taxon>
    </lineage>
</organism>
<accession>P56586</accession>
<dbReference type="GO" id="GO:0006221">
    <property type="term" value="P:pyrimidine nucleotide biosynthetic process"/>
    <property type="evidence" value="ECO:0007669"/>
    <property type="project" value="UniProtKB-KW"/>
</dbReference>
<name>PYRX_PSEFA</name>
<gene>
    <name type="primary">pyrC'</name>
</gene>